<evidence type="ECO:0000250" key="1">
    <source>
        <dbReference type="UniProtKB" id="Q504Y0"/>
    </source>
</evidence>
<evidence type="ECO:0000250" key="2">
    <source>
        <dbReference type="UniProtKB" id="Q5FWH7"/>
    </source>
</evidence>
<evidence type="ECO:0000255" key="3"/>
<evidence type="ECO:0000305" key="4"/>
<accession>Q95KA5</accession>
<proteinExistence type="evidence at transcript level"/>
<sequence length="654" mass="72794">MCFQTKLSISWVPLFLLLSRVFSTETDKPSAQDSRGRGSSGQLADLLQVLSAGDHPPHNHSRSLIKTLLEKTGCPRRRNGMQGDCHLCFEPDALLLIAGGNFEDQLREEVVQRVSLLLLYYIIHQEEICSSKLNMSNKEYKFYLHSLLSLRQDEDSSFLSQNETEDILAFTRQYFDTSQSQCMETKTLQKKSGIVSSEGANENTLPQLAATIITLSLQGVCLGQGNLPSPDYFTEYIFSSLNRTHTLRLSELDQLLNTLWTRSTCIKKDKIHQLQRKQNSIITPDQDYSNFSSSMDEESEDGPISWDQTCFSARQLVEIFLQKSLSPISKEDFKQMSPGIIQQLLSCSCHLPKDQQAKLPPTTLEKYGYSTVAVTLLTLGSMLGTALVLFHSCEENYRLILQLFVGLAVGTLSGDALLHLIPQVLGLHKQEAPEFGHFHESKGHIWKLLGLIGGIHGFFLIEKCFILLVSPNDKKSPEDSQAAEMPIGSMTAPNRKCKVISLLAIMILVGDSLHNFADGLAIGAAFSSSSESGVTTTIAILCHEIPHEMGDFAVLLSSGLSMKTAILMNFISSLTAFIGLYIGLSVSADPCVQDWIFTVTAGMFLYLSLVEMPPEMTHVQTQRPWMMFLLQNFGLILGWLSLLLLAIYEQNIKK</sequence>
<organism>
    <name type="scientific">Macaca fascicularis</name>
    <name type="common">Crab-eating macaque</name>
    <name type="synonym">Cynomolgus monkey</name>
    <dbReference type="NCBI Taxonomy" id="9541"/>
    <lineage>
        <taxon>Eukaryota</taxon>
        <taxon>Metazoa</taxon>
        <taxon>Chordata</taxon>
        <taxon>Craniata</taxon>
        <taxon>Vertebrata</taxon>
        <taxon>Euteleostomi</taxon>
        <taxon>Mammalia</taxon>
        <taxon>Eutheria</taxon>
        <taxon>Euarchontoglires</taxon>
        <taxon>Primates</taxon>
        <taxon>Haplorrhini</taxon>
        <taxon>Catarrhini</taxon>
        <taxon>Cercopithecidae</taxon>
        <taxon>Cercopithecinae</taxon>
        <taxon>Macaca</taxon>
    </lineage>
</organism>
<comment type="function">
    <text evidence="2">Uniporter that promotes Zn(2+) import from the extracellular space to the cytoplasm across the cell membrane. The transport activity is temperature dependent. May play a role in neurulation and neurite extension. May play a key role in maintaining intracellular zinc content at levels that reduce the inhibitory effects of rises in oxidative stress on spermatogonia and spermatozoa viability during spermatogenesis.</text>
</comment>
<comment type="catalytic activity">
    <reaction evidence="2">
        <text>Zn(2+)(in) = Zn(2+)(out)</text>
        <dbReference type="Rhea" id="RHEA:29351"/>
        <dbReference type="ChEBI" id="CHEBI:29105"/>
    </reaction>
</comment>
<comment type="subcellular location">
    <subcellularLocation>
        <location evidence="2">Membrane</location>
        <topology evidence="3">Multi-pass membrane protein</topology>
    </subcellularLocation>
    <text evidence="2">At low Zn(2+) extracellular concentration, is redistributed from the perinuclear space to the cytoplasm and plasma membrane.</text>
</comment>
<comment type="similarity">
    <text evidence="4">Belongs to the ZIP transporter (TC 2.A.5) family.</text>
</comment>
<gene>
    <name evidence="1" type="primary">SLC39A12</name>
    <name type="synonym">ZIP12</name>
    <name type="ORF">QmoA-11613</name>
</gene>
<name>S39AC_MACFA</name>
<dbReference type="EMBL" id="AB063029">
    <property type="protein sequence ID" value="BAB60771.1"/>
    <property type="molecule type" value="mRNA"/>
</dbReference>
<dbReference type="RefSeq" id="NP_001306521.1">
    <property type="nucleotide sequence ID" value="NM_001319592.1"/>
</dbReference>
<dbReference type="SMR" id="Q95KA5"/>
<dbReference type="STRING" id="9541.ENSMFAP00000001528"/>
<dbReference type="eggNOG" id="KOG2693">
    <property type="taxonomic scope" value="Eukaryota"/>
</dbReference>
<dbReference type="Proteomes" id="UP000233100">
    <property type="component" value="Unplaced"/>
</dbReference>
<dbReference type="GO" id="GO:0005886">
    <property type="term" value="C:plasma membrane"/>
    <property type="evidence" value="ECO:0007669"/>
    <property type="project" value="TreeGrafter"/>
</dbReference>
<dbReference type="GO" id="GO:0140410">
    <property type="term" value="F:monoatomic cation:bicarbonate symporter activity"/>
    <property type="evidence" value="ECO:0007669"/>
    <property type="project" value="TreeGrafter"/>
</dbReference>
<dbReference type="GO" id="GO:0005385">
    <property type="term" value="F:zinc ion transmembrane transporter activity"/>
    <property type="evidence" value="ECO:0000250"/>
    <property type="project" value="UniProtKB"/>
</dbReference>
<dbReference type="GO" id="GO:0030003">
    <property type="term" value="P:intracellular monoatomic cation homeostasis"/>
    <property type="evidence" value="ECO:0007669"/>
    <property type="project" value="TreeGrafter"/>
</dbReference>
<dbReference type="GO" id="GO:0001841">
    <property type="term" value="P:neural tube formation"/>
    <property type="evidence" value="ECO:0000250"/>
    <property type="project" value="UniProtKB"/>
</dbReference>
<dbReference type="GO" id="GO:1990138">
    <property type="term" value="P:neuron projection extension"/>
    <property type="evidence" value="ECO:0000250"/>
    <property type="project" value="UniProtKB"/>
</dbReference>
<dbReference type="GO" id="GO:0071578">
    <property type="term" value="P:zinc ion import across plasma membrane"/>
    <property type="evidence" value="ECO:0000250"/>
    <property type="project" value="UniProtKB"/>
</dbReference>
<dbReference type="InterPro" id="IPR003689">
    <property type="entry name" value="ZIP"/>
</dbReference>
<dbReference type="InterPro" id="IPR049406">
    <property type="entry name" value="ZIP4_12_EF-hand"/>
</dbReference>
<dbReference type="InterPro" id="IPR041137">
    <property type="entry name" value="ZIP4_N"/>
</dbReference>
<dbReference type="InterPro" id="IPR050799">
    <property type="entry name" value="ZIP_Transporter"/>
</dbReference>
<dbReference type="PANTHER" id="PTHR12191">
    <property type="entry name" value="SOLUTE CARRIER FAMILY 39"/>
    <property type="match status" value="1"/>
</dbReference>
<dbReference type="PANTHER" id="PTHR12191:SF4">
    <property type="entry name" value="ZINC TRANSPORTER ZIP12"/>
    <property type="match status" value="1"/>
</dbReference>
<dbReference type="Pfam" id="PF21116">
    <property type="entry name" value="EF-hand_Zip"/>
    <property type="match status" value="1"/>
</dbReference>
<dbReference type="Pfam" id="PF02535">
    <property type="entry name" value="Zip"/>
    <property type="match status" value="1"/>
</dbReference>
<dbReference type="Pfam" id="PF18292">
    <property type="entry name" value="ZIP4_domain"/>
    <property type="match status" value="1"/>
</dbReference>
<reference key="1">
    <citation type="submission" date="2001-06" db="EMBL/GenBank/DDBJ databases">
        <title>Isolation of full-length cDNA clones from macaque brain cDNA libraries.</title>
        <authorList>
            <person name="Osada N."/>
            <person name="Hida M."/>
            <person name="Kusuda J."/>
            <person name="Tanuma R."/>
            <person name="Iseki K."/>
            <person name="Hirai M."/>
            <person name="Terao K."/>
            <person name="Suzuki Y."/>
            <person name="Sugano S."/>
            <person name="Hashimoto K."/>
        </authorList>
    </citation>
    <scope>NUCLEOTIDE SEQUENCE [LARGE SCALE MRNA]</scope>
    <source>
        <tissue>Medulla oblongata</tissue>
    </source>
</reference>
<feature type="chain" id="PRO_0000312498" description="Zinc transporter ZIP12">
    <location>
        <begin position="1"/>
        <end position="654"/>
    </location>
</feature>
<feature type="topological domain" description="Extracellular" evidence="3">
    <location>
        <begin position="1"/>
        <end position="207"/>
    </location>
</feature>
<feature type="transmembrane region" description="Helical" evidence="3">
    <location>
        <begin position="208"/>
        <end position="228"/>
    </location>
</feature>
<feature type="topological domain" description="Cytoplasmic" evidence="3">
    <location>
        <begin position="229"/>
        <end position="369"/>
    </location>
</feature>
<feature type="transmembrane region" description="Helical" evidence="3">
    <location>
        <begin position="370"/>
        <end position="390"/>
    </location>
</feature>
<feature type="topological domain" description="Extracellular" evidence="3">
    <location>
        <begin position="391"/>
        <end position="398"/>
    </location>
</feature>
<feature type="transmembrane region" description="Helical" evidence="3">
    <location>
        <begin position="399"/>
        <end position="419"/>
    </location>
</feature>
<feature type="topological domain" description="Cytoplasmic" evidence="3">
    <location>
        <begin position="420"/>
        <end position="448"/>
    </location>
</feature>
<feature type="transmembrane region" description="Helical" evidence="3">
    <location>
        <begin position="449"/>
        <end position="469"/>
    </location>
</feature>
<feature type="topological domain" description="Extracellular" evidence="3">
    <location>
        <begin position="470"/>
        <end position="501"/>
    </location>
</feature>
<feature type="transmembrane region" description="Helical" evidence="3">
    <location>
        <begin position="502"/>
        <end position="522"/>
    </location>
</feature>
<feature type="topological domain" description="Cytoplasmic" evidence="3">
    <location>
        <begin position="523"/>
        <end position="565"/>
    </location>
</feature>
<feature type="transmembrane region" description="Helical" evidence="3">
    <location>
        <begin position="566"/>
        <end position="586"/>
    </location>
</feature>
<feature type="topological domain" description="Extracellular" evidence="3">
    <location>
        <begin position="587"/>
        <end position="589"/>
    </location>
</feature>
<feature type="transmembrane region" description="Helical" evidence="3">
    <location>
        <begin position="590"/>
        <end position="610"/>
    </location>
</feature>
<feature type="topological domain" description="Cytoplasmic" evidence="3">
    <location>
        <begin position="611"/>
        <end position="626"/>
    </location>
</feature>
<feature type="transmembrane region" description="Helical" evidence="3">
    <location>
        <begin position="627"/>
        <end position="647"/>
    </location>
</feature>
<feature type="topological domain" description="Extracellular" evidence="3">
    <location>
        <begin position="648"/>
        <end position="654"/>
    </location>
</feature>
<feature type="short sequence motif" description="XEXPHE-motif" evidence="1">
    <location>
        <begin position="543"/>
        <end position="548"/>
    </location>
</feature>
<keyword id="KW-0406">Ion transport</keyword>
<keyword id="KW-0472">Membrane</keyword>
<keyword id="KW-1185">Reference proteome</keyword>
<keyword id="KW-0812">Transmembrane</keyword>
<keyword id="KW-1133">Transmembrane helix</keyword>
<keyword id="KW-0813">Transport</keyword>
<keyword id="KW-0862">Zinc</keyword>
<keyword id="KW-0864">Zinc transport</keyword>
<protein>
    <recommendedName>
        <fullName evidence="2">Zinc transporter ZIP12</fullName>
    </recommendedName>
    <alternativeName>
        <fullName>Solute carrier family 39 member 12</fullName>
    </alternativeName>
    <alternativeName>
        <fullName>Zrt- and Irt-like protein 12</fullName>
        <shortName>ZIP-12</shortName>
    </alternativeName>
</protein>